<evidence type="ECO:0000255" key="1">
    <source>
        <dbReference type="HAMAP-Rule" id="MF_01924"/>
    </source>
</evidence>
<evidence type="ECO:0000269" key="2">
    <source>
    </source>
</evidence>
<evidence type="ECO:0000269" key="3">
    <source>
    </source>
</evidence>
<evidence type="ECO:0000269" key="4">
    <source>
    </source>
</evidence>
<evidence type="ECO:0000269" key="5">
    <source>
    </source>
</evidence>
<evidence type="ECO:0000305" key="6"/>
<evidence type="ECO:0000305" key="7">
    <source>
    </source>
</evidence>
<evidence type="ECO:0000305" key="8">
    <source>
    </source>
</evidence>
<evidence type="ECO:0007829" key="9">
    <source>
        <dbReference type="PDB" id="1R44"/>
    </source>
</evidence>
<gene>
    <name type="primary">vanX</name>
</gene>
<comment type="function">
    <text evidence="1 3 4">Catalyzes hydrolysis of the D-alanyl-D-alanine dipeptide.</text>
</comment>
<comment type="catalytic activity">
    <reaction evidence="1 3 4">
        <text>D-alanyl-D-alanine + H2O = 2 D-alanine</text>
        <dbReference type="Rhea" id="RHEA:20661"/>
        <dbReference type="ChEBI" id="CHEBI:15377"/>
        <dbReference type="ChEBI" id="CHEBI:57416"/>
        <dbReference type="ChEBI" id="CHEBI:57822"/>
        <dbReference type="EC" id="3.4.13.22"/>
    </reaction>
</comment>
<comment type="cofactor">
    <cofactor evidence="1 4 5">
        <name>Zn(2+)</name>
        <dbReference type="ChEBI" id="CHEBI:29105"/>
    </cofactor>
    <cofactor evidence="1 4 5">
        <name>Fe(2+)</name>
        <dbReference type="ChEBI" id="CHEBI:29033"/>
    </cofactor>
    <cofactor evidence="1 4 5">
        <name>Co(2+)</name>
        <dbReference type="ChEBI" id="CHEBI:48828"/>
    </cofactor>
    <cofactor evidence="1 4 5">
        <name>Ni(2+)</name>
        <dbReference type="ChEBI" id="CHEBI:49786"/>
    </cofactor>
    <text evidence="1 4 5">Binds 1 zinc ion per subunit. Can also be activated by other divalent cations such as iron, cobalt, or nickel.</text>
</comment>
<comment type="activity regulation">
    <text evidence="4">Inhibited by aminoalkyl phosphinate analogs.</text>
</comment>
<comment type="biophysicochemical properties">
    <kinetics>
        <KM evidence="4">1 mM for D-Ala-D-Ala (in the absence of divalent cations)</KM>
        <KM evidence="4">2.8 mM for D-Ala-D-Ser</KM>
        <KM evidence="4">1.7 mM for D-Ser-D-Ala</KM>
        <Vmax evidence="4">12.3 nmol/min/ug enzyme with D-Ala-D-Ala as substrate</Vmax>
        <Vmax evidence="4">4.7 nmol/min/ug enzyme with D-Ala-D-Ser as substrate</Vmax>
        <Vmax evidence="4">1.3 nmol/min/ug enzyme with D-Ser-D-Ala as substrate</Vmax>
        <text>kcat is 4.7 sec(-1) with D-Ala-D-Ala. kcat is 1.8 sec(-1) with D-Ala-D-Ser. kcat is 0.35 sec(-1) with D-Ser-D-Ala. kcat is 0.005 sec(-1) with D-Ala-D-lactate.</text>
    </kinetics>
    <phDependence>
        <text evidence="4">Optimum pH is 7-9.</text>
    </phDependence>
</comment>
<comment type="subunit">
    <text evidence="4 5">Homodimer.</text>
</comment>
<comment type="induction">
    <text evidence="2">By vancomycin, mediated by VanS/VanR.</text>
</comment>
<comment type="miscellaneous">
    <text evidence="7">Does not hydrolyze D-Ala-D-lactate, which remains intact for subsequent incorporation into peptidoglycan precursors. Production of precursors ending in D-Ala-D-lactate instead of D-Ala-D-Ala decreases affinity of vancomycin for the peptidoglycan chain and leads to vancomycin resistance (PubMed:7873524).</text>
</comment>
<comment type="similarity">
    <text evidence="1">Belongs to the peptidase M15D family.</text>
</comment>
<protein>
    <recommendedName>
        <fullName evidence="1">D-alanyl-D-alanine dipeptidase</fullName>
        <shortName evidence="1">D-Ala-D-Ala dipeptidase</shortName>
        <ecNumber evidence="1">3.4.13.22</ecNumber>
    </recommendedName>
    <alternativeName>
        <fullName evidence="6">Vancomycin A-type resistance protein VanX</fullName>
    </alternativeName>
</protein>
<sequence length="202" mass="23380">MEIGFTFLDEIVHGVRWDAKYATWDNFTGKPVDGYEVNRIVGTYELAESLLKAKELAATQGYGLLLWDGYRPKRAVNCFMQWAAQPENNLTKESYYPNIDRTEMISKGYVASKSSHSRGSAIDLTLYRLDTGELVPMGSRFDFMDERSHHAANGISCNEAQNRRRLRSIMENSGFEAYSLEWWHYVLRDEPYPNSYFDFPVK</sequence>
<proteinExistence type="evidence at protein level"/>
<geneLocation type="plasmid">
    <name>pIP816</name>
</geneLocation>
<dbReference type="EC" id="3.4.13.22" evidence="1"/>
<dbReference type="EMBL" id="M97297">
    <property type="protein sequence ID" value="AAA65957.1"/>
    <property type="molecule type" value="Genomic_DNA"/>
</dbReference>
<dbReference type="PIR" id="S72342">
    <property type="entry name" value="S72342"/>
</dbReference>
<dbReference type="RefSeq" id="WP_000402347.1">
    <property type="nucleotide sequence ID" value="NZ_WSZC01000116.1"/>
</dbReference>
<dbReference type="RefSeq" id="YP_001019034.1">
    <property type="nucleotide sequence ID" value="NC_008821.1"/>
</dbReference>
<dbReference type="RefSeq" id="YP_001974795.1">
    <property type="nucleotide sequence ID" value="NC_010980.1"/>
</dbReference>
<dbReference type="RefSeq" id="YP_002128400.1">
    <property type="nucleotide sequence ID" value="NC_011140.1"/>
</dbReference>
<dbReference type="RefSeq" id="YP_976076.1">
    <property type="nucleotide sequence ID" value="NC_008768.1"/>
</dbReference>
<dbReference type="PDB" id="1R44">
    <property type="method" value="X-ray"/>
    <property type="resolution" value="2.25 A"/>
    <property type="chains" value="A/B/C/D/E/F=1-202"/>
</dbReference>
<dbReference type="PDB" id="8XZ2">
    <property type="method" value="NMR"/>
    <property type="chains" value="B/C=1-202"/>
</dbReference>
<dbReference type="PDBsum" id="1R44"/>
<dbReference type="PDBsum" id="8XZ2"/>
<dbReference type="SMR" id="Q06241"/>
<dbReference type="BindingDB" id="Q06241"/>
<dbReference type="ChEMBL" id="CHEMBL1681622"/>
<dbReference type="DrugCentral" id="Q06241"/>
<dbReference type="CARD" id="ARO:3002949">
    <property type="molecule name" value="vanX_in_vanA_cl"/>
    <property type="mechanism identifier" value="ARO:0001001"/>
    <property type="mechanism name" value="antibiotic target alteration"/>
</dbReference>
<dbReference type="MEROPS" id="M15.011"/>
<dbReference type="KEGG" id="ag:AAA65957"/>
<dbReference type="BioCyc" id="MetaCyc:MONOMER-15475"/>
<dbReference type="BRENDA" id="3.4.13.22">
    <property type="organism ID" value="2096"/>
</dbReference>
<dbReference type="SABIO-RK" id="Q06241"/>
<dbReference type="EvolutionaryTrace" id="Q06241"/>
<dbReference type="PRO" id="PR:Q06241"/>
<dbReference type="GO" id="GO:0160237">
    <property type="term" value="F:D-Ala-D-Ala dipeptidase activity"/>
    <property type="evidence" value="ECO:0007669"/>
    <property type="project" value="UniProtKB-EC"/>
</dbReference>
<dbReference type="GO" id="GO:0008237">
    <property type="term" value="F:metallopeptidase activity"/>
    <property type="evidence" value="ECO:0007669"/>
    <property type="project" value="UniProtKB-KW"/>
</dbReference>
<dbReference type="GO" id="GO:0008270">
    <property type="term" value="F:zinc ion binding"/>
    <property type="evidence" value="ECO:0007669"/>
    <property type="project" value="UniProtKB-UniRule"/>
</dbReference>
<dbReference type="GO" id="GO:0071555">
    <property type="term" value="P:cell wall organization"/>
    <property type="evidence" value="ECO:0007669"/>
    <property type="project" value="UniProtKB-KW"/>
</dbReference>
<dbReference type="GO" id="GO:0006508">
    <property type="term" value="P:proteolysis"/>
    <property type="evidence" value="ECO:0007669"/>
    <property type="project" value="UniProtKB-KW"/>
</dbReference>
<dbReference type="GO" id="GO:0046677">
    <property type="term" value="P:response to antibiotic"/>
    <property type="evidence" value="ECO:0007669"/>
    <property type="project" value="UniProtKB-KW"/>
</dbReference>
<dbReference type="CDD" id="cd14817">
    <property type="entry name" value="D-Ala-D-Ala_dipeptidase_VanX"/>
    <property type="match status" value="1"/>
</dbReference>
<dbReference type="Gene3D" id="3.30.1380.10">
    <property type="match status" value="1"/>
</dbReference>
<dbReference type="HAMAP" id="MF_01924">
    <property type="entry name" value="A_A_dipeptidase"/>
    <property type="match status" value="1"/>
</dbReference>
<dbReference type="InterPro" id="IPR000755">
    <property type="entry name" value="A_A_dipeptidase"/>
</dbReference>
<dbReference type="InterPro" id="IPR009045">
    <property type="entry name" value="Hedgehog_sig/DD-Pept_Zn-bd_sf"/>
</dbReference>
<dbReference type="NCBIfam" id="NF033115">
    <property type="entry name" value="dipept_VanX"/>
    <property type="match status" value="1"/>
</dbReference>
<dbReference type="PANTHER" id="PTHR43126">
    <property type="entry name" value="D-ALANYL-D-ALANINE DIPEPTIDASE"/>
    <property type="match status" value="1"/>
</dbReference>
<dbReference type="PANTHER" id="PTHR43126:SF1">
    <property type="entry name" value="D-ALANYL-D-ALANINE DIPEPTIDASE"/>
    <property type="match status" value="1"/>
</dbReference>
<dbReference type="Pfam" id="PF01427">
    <property type="entry name" value="Peptidase_M15"/>
    <property type="match status" value="1"/>
</dbReference>
<dbReference type="PIRSF" id="PIRSF026671">
    <property type="entry name" value="AA_dipeptidase"/>
    <property type="match status" value="1"/>
</dbReference>
<dbReference type="SUPFAM" id="SSF55166">
    <property type="entry name" value="Hedgehog/DD-peptidase"/>
    <property type="match status" value="1"/>
</dbReference>
<feature type="chain" id="PRO_0000217840" description="D-alanyl-D-alanine dipeptidase">
    <location>
        <begin position="1"/>
        <end position="202"/>
    </location>
</feature>
<feature type="active site" description="Proton donor/acceptor" evidence="8">
    <location>
        <position position="181"/>
    </location>
</feature>
<feature type="binding site" evidence="1 5">
    <location>
        <position position="116"/>
    </location>
    <ligand>
        <name>Zn(2+)</name>
        <dbReference type="ChEBI" id="CHEBI:29105"/>
        <note>catalytic</note>
    </ligand>
</feature>
<feature type="binding site" evidence="1 5">
    <location>
        <position position="123"/>
    </location>
    <ligand>
        <name>Zn(2+)</name>
        <dbReference type="ChEBI" id="CHEBI:29105"/>
        <note>catalytic</note>
    </ligand>
</feature>
<feature type="binding site" evidence="1 5">
    <location>
        <position position="184"/>
    </location>
    <ligand>
        <name>Zn(2+)</name>
        <dbReference type="ChEBI" id="CHEBI:29105"/>
        <note>catalytic</note>
    </ligand>
</feature>
<feature type="site" description="Transition state stabilizer" evidence="6">
    <location>
        <position position="71"/>
    </location>
</feature>
<feature type="strand" evidence="9">
    <location>
        <begin position="5"/>
        <end position="7"/>
    </location>
</feature>
<feature type="helix" evidence="9">
    <location>
        <begin position="8"/>
        <end position="10"/>
    </location>
</feature>
<feature type="helix" evidence="9">
    <location>
        <begin position="20"/>
        <end position="22"/>
    </location>
</feature>
<feature type="strand" evidence="9">
    <location>
        <begin position="37"/>
        <end position="39"/>
    </location>
</feature>
<feature type="strand" evidence="9">
    <location>
        <begin position="41"/>
        <end position="43"/>
    </location>
</feature>
<feature type="helix" evidence="9">
    <location>
        <begin position="44"/>
        <end position="56"/>
    </location>
</feature>
<feature type="strand" evidence="9">
    <location>
        <begin position="59"/>
        <end position="68"/>
    </location>
</feature>
<feature type="helix" evidence="9">
    <location>
        <begin position="73"/>
        <end position="83"/>
    </location>
</feature>
<feature type="helix" evidence="9">
    <location>
        <begin position="92"/>
        <end position="95"/>
    </location>
</feature>
<feature type="strand" evidence="9">
    <location>
        <begin position="97"/>
        <end position="99"/>
    </location>
</feature>
<feature type="helix" evidence="9">
    <location>
        <begin position="103"/>
        <end position="106"/>
    </location>
</feature>
<feature type="strand" evidence="9">
    <location>
        <begin position="108"/>
        <end position="110"/>
    </location>
</feature>
<feature type="helix" evidence="9">
    <location>
        <begin position="115"/>
        <end position="118"/>
    </location>
</feature>
<feature type="strand" evidence="9">
    <location>
        <begin position="121"/>
        <end position="128"/>
    </location>
</feature>
<feature type="turn" evidence="9">
    <location>
        <begin position="129"/>
        <end position="131"/>
    </location>
</feature>
<feature type="helix" evidence="9">
    <location>
        <begin position="146"/>
        <end position="148"/>
    </location>
</feature>
<feature type="strand" evidence="9">
    <location>
        <begin position="153"/>
        <end position="155"/>
    </location>
</feature>
<feature type="helix" evidence="9">
    <location>
        <begin position="157"/>
        <end position="171"/>
    </location>
</feature>
<feature type="turn" evidence="9">
    <location>
        <begin position="172"/>
        <end position="174"/>
    </location>
</feature>
<feature type="strand" evidence="9">
    <location>
        <begin position="175"/>
        <end position="177"/>
    </location>
</feature>
<feature type="strand" evidence="9">
    <location>
        <begin position="184"/>
        <end position="189"/>
    </location>
</feature>
<name>VANX_ENTFC</name>
<keyword id="KW-0002">3D-structure</keyword>
<keyword id="KW-0046">Antibiotic resistance</keyword>
<keyword id="KW-0961">Cell wall biogenesis/degradation</keyword>
<keyword id="KW-0224">Dipeptidase</keyword>
<keyword id="KW-0903">Direct protein sequencing</keyword>
<keyword id="KW-0378">Hydrolase</keyword>
<keyword id="KW-0479">Metal-binding</keyword>
<keyword id="KW-0482">Metalloprotease</keyword>
<keyword id="KW-0614">Plasmid</keyword>
<keyword id="KW-0645">Protease</keyword>
<keyword id="KW-0862">Zinc</keyword>
<reference key="1">
    <citation type="journal article" date="1993" name="J. Bacteriol.">
        <title>Characterization of Tn1546, a Tn3-related transposon conferring glycopeptide resistance by synthesis of depsipeptide peptidoglycan precursors in Enterococcus faecium BM4147.</title>
        <authorList>
            <person name="Arthur M."/>
            <person name="Molinas C."/>
            <person name="Depardieu F."/>
            <person name="Courvalin P."/>
        </authorList>
    </citation>
    <scope>NUCLEOTIDE SEQUENCE [GENOMIC DNA]</scope>
    <source>
        <strain>BM4147</strain>
        <transposon>Tn1546</transposon>
    </source>
</reference>
<reference key="2">
    <citation type="journal article" date="1995" name="Biochemistry">
        <title>Overexpression, purification, and characterization of VanX, a D-, D-dipeptidase which is essential for vancomycin resistance in Enterococcus faecium BM4147.</title>
        <authorList>
            <person name="Wu Z."/>
            <person name="Wright G.D."/>
            <person name="Walsh C.T."/>
        </authorList>
    </citation>
    <scope>PROTEIN SEQUENCE OF 1-10</scope>
    <scope>FUNCTION</scope>
    <scope>CATALYTIC ACTIVITY</scope>
    <scope>COFACTOR</scope>
    <scope>SUBUNIT</scope>
    <scope>ACTIVITY REGULATION</scope>
    <scope>BIOPHYSICOCHEMICAL PROPERTIES</scope>
</reference>
<reference key="3">
    <citation type="journal article" date="1992" name="J. Bacteriol.">
        <title>The VanS-VanR two-component regulatory system controls synthesis of depsipeptide peptidoglycan precursors in Enterococcus faecium BM4147.</title>
        <authorList>
            <person name="Arthur M."/>
            <person name="Molinas C."/>
            <person name="Courvalin P."/>
        </authorList>
    </citation>
    <scope>INDUCTION</scope>
    <source>
        <strain>BM4147</strain>
    </source>
</reference>
<reference key="4">
    <citation type="journal article" date="1994" name="Mol. Microbiol.">
        <title>Glycopeptide resistance mediated by enterococcal transposon Tn1546 requires production of VanX for hydrolysis of D-alanyl-D-alanine.</title>
        <authorList>
            <person name="Reynolds P.E."/>
            <person name="Depardieu F."/>
            <person name="Dutka-Malen S."/>
            <person name="Arthur M."/>
            <person name="Courvalin P."/>
        </authorList>
    </citation>
    <scope>FUNCTION</scope>
    <scope>CATALYTIC ACTIVITY</scope>
</reference>
<reference key="5">
    <citation type="journal article" date="1998" name="Mol. Cell">
        <title>The structure of VanX reveals a novel amino-dipeptidase involved in mediating transposon-based vancomycin resistance.</title>
        <authorList>
            <person name="Bussiere D.E."/>
            <person name="Pratt S.D."/>
            <person name="Katz L."/>
            <person name="Severin J.M."/>
            <person name="Holzman T."/>
            <person name="Park C.H."/>
        </authorList>
    </citation>
    <scope>X-RAY CRYSTALLOGRAPHY (2.25 ANGSTROMS) IN COMPLEX WITH ZINC</scope>
    <scope>COFACTOR</scope>
    <scope>SUBUNIT</scope>
    <scope>ACTIVE SITE</scope>
</reference>
<accession>Q06241</accession>
<organism>
    <name type="scientific">Enterococcus faecium</name>
    <name type="common">Streptococcus faecium</name>
    <dbReference type="NCBI Taxonomy" id="1352"/>
    <lineage>
        <taxon>Bacteria</taxon>
        <taxon>Bacillati</taxon>
        <taxon>Bacillota</taxon>
        <taxon>Bacilli</taxon>
        <taxon>Lactobacillales</taxon>
        <taxon>Enterococcaceae</taxon>
        <taxon>Enterococcus</taxon>
    </lineage>
</organism>